<reference key="1">
    <citation type="journal article" date="2003" name="Nature">
        <title>Genome sequence of Bacillus cereus and comparative analysis with Bacillus anthracis.</title>
        <authorList>
            <person name="Ivanova N."/>
            <person name="Sorokin A."/>
            <person name="Anderson I."/>
            <person name="Galleron N."/>
            <person name="Candelon B."/>
            <person name="Kapatral V."/>
            <person name="Bhattacharyya A."/>
            <person name="Reznik G."/>
            <person name="Mikhailova N."/>
            <person name="Lapidus A."/>
            <person name="Chu L."/>
            <person name="Mazur M."/>
            <person name="Goltsman E."/>
            <person name="Larsen N."/>
            <person name="D'Souza M."/>
            <person name="Walunas T."/>
            <person name="Grechkin Y."/>
            <person name="Pusch G."/>
            <person name="Haselkorn R."/>
            <person name="Fonstein M."/>
            <person name="Ehrlich S.D."/>
            <person name="Overbeek R."/>
            <person name="Kyrpides N.C."/>
        </authorList>
    </citation>
    <scope>NUCLEOTIDE SEQUENCE [LARGE SCALE GENOMIC DNA]</scope>
    <source>
        <strain>ATCC 14579 / DSM 31 / CCUG 7414 / JCM 2152 / NBRC 15305 / NCIMB 9373 / NCTC 2599 / NRRL B-3711</strain>
    </source>
</reference>
<reference key="2">
    <citation type="journal article" date="2003" name="FEMS Microbiol. Lett.">
        <title>Aerobic tryptophan degradation pathway in bacteria: novel kynurenine formamidase.</title>
        <authorList>
            <person name="Kurnasov O."/>
            <person name="Jablonski L."/>
            <person name="Polanuyer B."/>
            <person name="Dorrestein P."/>
            <person name="Begley T."/>
            <person name="Osterman A."/>
        </authorList>
    </citation>
    <scope>FUNCTION</scope>
    <scope>CATALYTIC ACTIVITY</scope>
    <scope>PATHWAY</scope>
    <source>
        <strain>ATCC 14579 / DSM 31 / CCUG 7414 / JCM 2152 / NBRC 15305 / NCIMB 9373 / NCTC 2599 / NRRL B-3711</strain>
    </source>
</reference>
<dbReference type="EC" id="3.5.1.9" evidence="1 2"/>
<dbReference type="EMBL" id="AE016877">
    <property type="protein sequence ID" value="AAP09711.1"/>
    <property type="molecule type" value="Genomic_DNA"/>
</dbReference>
<dbReference type="RefSeq" id="NP_832510.1">
    <property type="nucleotide sequence ID" value="NC_004722.1"/>
</dbReference>
<dbReference type="RefSeq" id="WP_000858074.1">
    <property type="nucleotide sequence ID" value="NZ_CP138336.1"/>
</dbReference>
<dbReference type="SMR" id="Q81CK1"/>
<dbReference type="STRING" id="226900.BC_2758"/>
<dbReference type="GeneID" id="67467069"/>
<dbReference type="KEGG" id="bce:BC2758"/>
<dbReference type="PATRIC" id="fig|226900.8.peg.2813"/>
<dbReference type="HOGENOM" id="CLU_030671_3_1_9"/>
<dbReference type="OrthoDB" id="9796085at2"/>
<dbReference type="UniPathway" id="UPA00333">
    <property type="reaction ID" value="UER00454"/>
</dbReference>
<dbReference type="Proteomes" id="UP000001417">
    <property type="component" value="Chromosome"/>
</dbReference>
<dbReference type="GO" id="GO:0004061">
    <property type="term" value="F:arylformamidase activity"/>
    <property type="evidence" value="ECO:0000314"/>
    <property type="project" value="UniProtKB"/>
</dbReference>
<dbReference type="GO" id="GO:0004328">
    <property type="term" value="F:formamidase activity"/>
    <property type="evidence" value="ECO:0007669"/>
    <property type="project" value="InterPro"/>
</dbReference>
<dbReference type="GO" id="GO:0008270">
    <property type="term" value="F:zinc ion binding"/>
    <property type="evidence" value="ECO:0007669"/>
    <property type="project" value="UniProtKB-UniRule"/>
</dbReference>
<dbReference type="GO" id="GO:0043420">
    <property type="term" value="P:anthranilate metabolic process"/>
    <property type="evidence" value="ECO:0000317"/>
    <property type="project" value="UniProtKB"/>
</dbReference>
<dbReference type="GO" id="GO:0019441">
    <property type="term" value="P:L-tryptophan catabolic process to kynurenine"/>
    <property type="evidence" value="ECO:0000318"/>
    <property type="project" value="GO_Central"/>
</dbReference>
<dbReference type="FunFam" id="3.50.30.50:FF:000001">
    <property type="entry name" value="Kynurenine formamidase"/>
    <property type="match status" value="1"/>
</dbReference>
<dbReference type="Gene3D" id="3.50.30.50">
    <property type="entry name" value="Putative cyclase"/>
    <property type="match status" value="1"/>
</dbReference>
<dbReference type="HAMAP" id="MF_01969">
    <property type="entry name" value="KynB"/>
    <property type="match status" value="1"/>
</dbReference>
<dbReference type="InterPro" id="IPR007325">
    <property type="entry name" value="KFase/CYL"/>
</dbReference>
<dbReference type="InterPro" id="IPR037175">
    <property type="entry name" value="KFase_sf"/>
</dbReference>
<dbReference type="InterPro" id="IPR017484">
    <property type="entry name" value="Kynurenine_formamidase_bac"/>
</dbReference>
<dbReference type="NCBIfam" id="TIGR03035">
    <property type="entry name" value="trp_arylform"/>
    <property type="match status" value="1"/>
</dbReference>
<dbReference type="PANTHER" id="PTHR31118">
    <property type="entry name" value="CYCLASE-LIKE PROTEIN 2"/>
    <property type="match status" value="1"/>
</dbReference>
<dbReference type="PANTHER" id="PTHR31118:SF32">
    <property type="entry name" value="KYNURENINE FORMAMIDASE"/>
    <property type="match status" value="1"/>
</dbReference>
<dbReference type="Pfam" id="PF04199">
    <property type="entry name" value="Cyclase"/>
    <property type="match status" value="1"/>
</dbReference>
<dbReference type="SUPFAM" id="SSF102198">
    <property type="entry name" value="Putative cyclase"/>
    <property type="match status" value="1"/>
</dbReference>
<name>KYNB_BACCR</name>
<accession>Q81CK1</accession>
<protein>
    <recommendedName>
        <fullName evidence="1 3">Kynurenine formamidase</fullName>
        <shortName evidence="1 3">KFA</shortName>
        <shortName evidence="1 3">KFase</shortName>
        <ecNumber evidence="1 2">3.5.1.9</ecNumber>
    </recommendedName>
    <alternativeName>
        <fullName evidence="1">Arylformamidase</fullName>
    </alternativeName>
    <alternativeName>
        <fullName evidence="1">N-formylkynurenine formamidase</fullName>
        <shortName evidence="1">FKF</shortName>
    </alternativeName>
</protein>
<keyword id="KW-0378">Hydrolase</keyword>
<keyword id="KW-0479">Metal-binding</keyword>
<keyword id="KW-1185">Reference proteome</keyword>
<keyword id="KW-0823">Tryptophan catabolism</keyword>
<keyword id="KW-0862">Zinc</keyword>
<sequence length="209" mass="23066">MKTSEWIDISQPLNNNIATWPGDTPFSYEVSWSKEESGSVNVGKLTMSIHTGTHIDAPFHFDNDGKKVLDLDVQVYVGPARIIDVSNLESIGKKELESFHLEGVERLLLRTSSHGKAEEFPEVIPHLRADIASFLSEKGIRLIGVDVPSVDPLDDKELAAHHQLFKHGIHILENVVLDHVADGDYELIALPLALTDADGSPVRAVIRPI</sequence>
<feature type="chain" id="PRO_0000362091" description="Kynurenine formamidase">
    <location>
        <begin position="1"/>
        <end position="209"/>
    </location>
</feature>
<feature type="active site" description="Proton donor/acceptor" evidence="1">
    <location>
        <position position="60"/>
    </location>
</feature>
<feature type="binding site" evidence="1">
    <location>
        <position position="20"/>
    </location>
    <ligand>
        <name>substrate</name>
    </ligand>
</feature>
<feature type="binding site" evidence="1">
    <location>
        <position position="50"/>
    </location>
    <ligand>
        <name>Zn(2+)</name>
        <dbReference type="ChEBI" id="CHEBI:29105"/>
        <label>1</label>
    </ligand>
</feature>
<feature type="binding site" evidence="1">
    <location>
        <position position="54"/>
    </location>
    <ligand>
        <name>Zn(2+)</name>
        <dbReference type="ChEBI" id="CHEBI:29105"/>
        <label>1</label>
    </ligand>
</feature>
<feature type="binding site" evidence="1">
    <location>
        <position position="56"/>
    </location>
    <ligand>
        <name>Zn(2+)</name>
        <dbReference type="ChEBI" id="CHEBI:29105"/>
        <label>1</label>
    </ligand>
</feature>
<feature type="binding site" evidence="1">
    <location>
        <position position="56"/>
    </location>
    <ligand>
        <name>Zn(2+)</name>
        <dbReference type="ChEBI" id="CHEBI:29105"/>
        <label>2</label>
    </ligand>
</feature>
<feature type="binding site" evidence="1">
    <location>
        <position position="161"/>
    </location>
    <ligand>
        <name>Zn(2+)</name>
        <dbReference type="ChEBI" id="CHEBI:29105"/>
        <label>2</label>
    </ligand>
</feature>
<feature type="binding site" evidence="1">
    <location>
        <position position="173"/>
    </location>
    <ligand>
        <name>Zn(2+)</name>
        <dbReference type="ChEBI" id="CHEBI:29105"/>
        <label>1</label>
    </ligand>
</feature>
<feature type="binding site" evidence="1">
    <location>
        <position position="173"/>
    </location>
    <ligand>
        <name>Zn(2+)</name>
        <dbReference type="ChEBI" id="CHEBI:29105"/>
        <label>2</label>
    </ligand>
</feature>
<evidence type="ECO:0000255" key="1">
    <source>
        <dbReference type="HAMAP-Rule" id="MF_01969"/>
    </source>
</evidence>
<evidence type="ECO:0000269" key="2">
    <source>
    </source>
</evidence>
<evidence type="ECO:0000303" key="3">
    <source>
    </source>
</evidence>
<evidence type="ECO:0000305" key="4">
    <source>
    </source>
</evidence>
<gene>
    <name evidence="1 3" type="primary">kynB</name>
    <name type="ordered locus">BC_2758</name>
</gene>
<proteinExistence type="evidence at protein level"/>
<comment type="function">
    <text evidence="1 2">Catalyzes the hydrolysis of N-formyl-L-kynurenine to L-kynurenine, the second step in the kynurenine pathway of tryptophan degradation.</text>
</comment>
<comment type="catalytic activity">
    <reaction evidence="1 2">
        <text>N-formyl-L-kynurenine + H2O = L-kynurenine + formate + H(+)</text>
        <dbReference type="Rhea" id="RHEA:13009"/>
        <dbReference type="ChEBI" id="CHEBI:15377"/>
        <dbReference type="ChEBI" id="CHEBI:15378"/>
        <dbReference type="ChEBI" id="CHEBI:15740"/>
        <dbReference type="ChEBI" id="CHEBI:57959"/>
        <dbReference type="ChEBI" id="CHEBI:58629"/>
        <dbReference type="EC" id="3.5.1.9"/>
    </reaction>
</comment>
<comment type="cofactor">
    <cofactor evidence="1">
        <name>Zn(2+)</name>
        <dbReference type="ChEBI" id="CHEBI:29105"/>
    </cofactor>
    <text evidence="1">Binds 2 zinc ions per subunit.</text>
</comment>
<comment type="pathway">
    <text evidence="1 4">Amino-acid degradation; L-tryptophan degradation via kynurenine pathway; L-kynurenine from L-tryptophan: step 2/2.</text>
</comment>
<comment type="subunit">
    <text evidence="1">Homodimer.</text>
</comment>
<comment type="similarity">
    <text evidence="1">Belongs to the Cyclase 1 superfamily. KynB family.</text>
</comment>
<organism>
    <name type="scientific">Bacillus cereus (strain ATCC 14579 / DSM 31 / CCUG 7414 / JCM 2152 / NBRC 15305 / NCIMB 9373 / NCTC 2599 / NRRL B-3711)</name>
    <dbReference type="NCBI Taxonomy" id="226900"/>
    <lineage>
        <taxon>Bacteria</taxon>
        <taxon>Bacillati</taxon>
        <taxon>Bacillota</taxon>
        <taxon>Bacilli</taxon>
        <taxon>Bacillales</taxon>
        <taxon>Bacillaceae</taxon>
        <taxon>Bacillus</taxon>
        <taxon>Bacillus cereus group</taxon>
    </lineage>
</organism>